<comment type="function">
    <text evidence="1">Catalyzes the formation of N(4)-acetylcytidine (ac(4)C) at the wobble position of elongator tRNA(Met), using acetate and ATP as substrates. First activates an acetate ion to form acetyladenylate (Ac-AMP) and then transfers the acetyl group to tRNA to form ac(4)C34.</text>
</comment>
<comment type="catalytic activity">
    <reaction evidence="1">
        <text>cytidine(34) in elongator tRNA(Met) + acetate + ATP = N(4)-acetylcytidine(34) in elongator tRNA(Met) + AMP + diphosphate</text>
        <dbReference type="Rhea" id="RHEA:58144"/>
        <dbReference type="Rhea" id="RHEA-COMP:10693"/>
        <dbReference type="Rhea" id="RHEA-COMP:10694"/>
        <dbReference type="ChEBI" id="CHEBI:30089"/>
        <dbReference type="ChEBI" id="CHEBI:30616"/>
        <dbReference type="ChEBI" id="CHEBI:33019"/>
        <dbReference type="ChEBI" id="CHEBI:74900"/>
        <dbReference type="ChEBI" id="CHEBI:82748"/>
        <dbReference type="ChEBI" id="CHEBI:456215"/>
    </reaction>
</comment>
<comment type="subcellular location">
    <subcellularLocation>
        <location evidence="1">Cytoplasm</location>
    </subcellularLocation>
</comment>
<comment type="similarity">
    <text evidence="1">Belongs to the TmcAL family.</text>
</comment>
<sequence length="385" mass="44226">MSVIGIVAEYNPFHSGHEFLLNQARLVSENDPIIVMMSGNYVQRGQMAIMDKWQRAKAALNSGADLVFELPFSFAVQPADIFANGSIRMLSNLGVSELFFGVEDANLNFSYLGQKINQIPKNRMDFRDYTQTYATQYNEMVAREVGHEVNQPNMMLAVAYAVASEQLDTPLHLHPVTRLGSGHDDQLLQDKIISSATAIRNYCLHHPNDLIELKKYLPKGELAALEKQKVYPNWNLLFNFLKYRIESASLEELRSIYQMSEGLEYKMKEEIHNAEDFTSFLRQIKSKRYTYARLRRLCLYTLLNVTEKEMQASYQDVSTLLLGYNSRGRNYLKKIRKDVELPIISKVDKKNAASGTLGLQVRVDRLFEQIMGEDQNFGRRPIEVK</sequence>
<gene>
    <name evidence="1" type="primary">tmcAL</name>
    <name type="ordered locus">LGAS_1400</name>
</gene>
<dbReference type="EC" id="6.3.4.-" evidence="1"/>
<dbReference type="EMBL" id="CP000413">
    <property type="protein sequence ID" value="ABJ60762.1"/>
    <property type="molecule type" value="Genomic_DNA"/>
</dbReference>
<dbReference type="RefSeq" id="WP_003646924.1">
    <property type="nucleotide sequence ID" value="NZ_WBMG01000003.1"/>
</dbReference>
<dbReference type="SMR" id="Q041W0"/>
<dbReference type="GeneID" id="29639651"/>
<dbReference type="KEGG" id="lga:LGAS_1400"/>
<dbReference type="HOGENOM" id="CLU_038915_0_2_9"/>
<dbReference type="BioCyc" id="LGAS324831:G1G6Y-1394-MONOMER"/>
<dbReference type="Proteomes" id="UP000000664">
    <property type="component" value="Chromosome"/>
</dbReference>
<dbReference type="GO" id="GO:0005737">
    <property type="term" value="C:cytoplasm"/>
    <property type="evidence" value="ECO:0007669"/>
    <property type="project" value="UniProtKB-SubCell"/>
</dbReference>
<dbReference type="GO" id="GO:0005524">
    <property type="term" value="F:ATP binding"/>
    <property type="evidence" value="ECO:0007669"/>
    <property type="project" value="UniProtKB-KW"/>
</dbReference>
<dbReference type="GO" id="GO:0016879">
    <property type="term" value="F:ligase activity, forming carbon-nitrogen bonds"/>
    <property type="evidence" value="ECO:0007669"/>
    <property type="project" value="UniProtKB-UniRule"/>
</dbReference>
<dbReference type="GO" id="GO:0000049">
    <property type="term" value="F:tRNA binding"/>
    <property type="evidence" value="ECO:0007669"/>
    <property type="project" value="UniProtKB-KW"/>
</dbReference>
<dbReference type="GO" id="GO:0006400">
    <property type="term" value="P:tRNA modification"/>
    <property type="evidence" value="ECO:0007669"/>
    <property type="project" value="UniProtKB-UniRule"/>
</dbReference>
<dbReference type="Gene3D" id="3.40.50.620">
    <property type="entry name" value="HUPs"/>
    <property type="match status" value="1"/>
</dbReference>
<dbReference type="HAMAP" id="MF_01539">
    <property type="entry name" value="TmcAL"/>
    <property type="match status" value="1"/>
</dbReference>
<dbReference type="InterPro" id="IPR014729">
    <property type="entry name" value="Rossmann-like_a/b/a_fold"/>
</dbReference>
<dbReference type="InterPro" id="IPR008513">
    <property type="entry name" value="tRNA(Met)_cyd_acetate_ligase"/>
</dbReference>
<dbReference type="NCBIfam" id="NF010191">
    <property type="entry name" value="PRK13670.1"/>
    <property type="match status" value="1"/>
</dbReference>
<dbReference type="PANTHER" id="PTHR37825">
    <property type="entry name" value="TRNA(MET) CYTIDINE ACETATE LIGASE"/>
    <property type="match status" value="1"/>
</dbReference>
<dbReference type="PANTHER" id="PTHR37825:SF1">
    <property type="entry name" value="TRNA(MET) CYTIDINE ACETATE LIGASE"/>
    <property type="match status" value="1"/>
</dbReference>
<dbReference type="Pfam" id="PF05636">
    <property type="entry name" value="HIGH_NTase1"/>
    <property type="match status" value="1"/>
</dbReference>
<dbReference type="SUPFAM" id="SSF52374">
    <property type="entry name" value="Nucleotidylyl transferase"/>
    <property type="match status" value="1"/>
</dbReference>
<accession>Q041W0</accession>
<reference key="1">
    <citation type="journal article" date="2006" name="Proc. Natl. Acad. Sci. U.S.A.">
        <title>Comparative genomics of the lactic acid bacteria.</title>
        <authorList>
            <person name="Makarova K.S."/>
            <person name="Slesarev A."/>
            <person name="Wolf Y.I."/>
            <person name="Sorokin A."/>
            <person name="Mirkin B."/>
            <person name="Koonin E.V."/>
            <person name="Pavlov A."/>
            <person name="Pavlova N."/>
            <person name="Karamychev V."/>
            <person name="Polouchine N."/>
            <person name="Shakhova V."/>
            <person name="Grigoriev I."/>
            <person name="Lou Y."/>
            <person name="Rohksar D."/>
            <person name="Lucas S."/>
            <person name="Huang K."/>
            <person name="Goodstein D.M."/>
            <person name="Hawkins T."/>
            <person name="Plengvidhya V."/>
            <person name="Welker D."/>
            <person name="Hughes J."/>
            <person name="Goh Y."/>
            <person name="Benson A."/>
            <person name="Baldwin K."/>
            <person name="Lee J.-H."/>
            <person name="Diaz-Muniz I."/>
            <person name="Dosti B."/>
            <person name="Smeianov V."/>
            <person name="Wechter W."/>
            <person name="Barabote R."/>
            <person name="Lorca G."/>
            <person name="Altermann E."/>
            <person name="Barrangou R."/>
            <person name="Ganesan B."/>
            <person name="Xie Y."/>
            <person name="Rawsthorne H."/>
            <person name="Tamir D."/>
            <person name="Parker C."/>
            <person name="Breidt F."/>
            <person name="Broadbent J.R."/>
            <person name="Hutkins R."/>
            <person name="O'Sullivan D."/>
            <person name="Steele J."/>
            <person name="Unlu G."/>
            <person name="Saier M.H. Jr."/>
            <person name="Klaenhammer T."/>
            <person name="Richardson P."/>
            <person name="Kozyavkin S."/>
            <person name="Weimer B.C."/>
            <person name="Mills D.A."/>
        </authorList>
    </citation>
    <scope>NUCLEOTIDE SEQUENCE [LARGE SCALE GENOMIC DNA]</scope>
    <source>
        <strain>ATCC 33323 / DSM 20243 / BCRC 14619 / CIP 102991 / JCM 1131 / KCTC 3163 / NCIMB 11718 / NCTC 13722 / AM63</strain>
    </source>
</reference>
<organism>
    <name type="scientific">Lactobacillus gasseri (strain ATCC 33323 / DSM 20243 / BCRC 14619 / CIP 102991 / JCM 1131 / KCTC 3163 / NCIMB 11718 / NCTC 13722 / AM63)</name>
    <dbReference type="NCBI Taxonomy" id="324831"/>
    <lineage>
        <taxon>Bacteria</taxon>
        <taxon>Bacillati</taxon>
        <taxon>Bacillota</taxon>
        <taxon>Bacilli</taxon>
        <taxon>Lactobacillales</taxon>
        <taxon>Lactobacillaceae</taxon>
        <taxon>Lactobacillus</taxon>
    </lineage>
</organism>
<evidence type="ECO:0000255" key="1">
    <source>
        <dbReference type="HAMAP-Rule" id="MF_01539"/>
    </source>
</evidence>
<protein>
    <recommendedName>
        <fullName evidence="1">tRNA(Met) cytidine acetate ligase</fullName>
        <ecNumber evidence="1">6.3.4.-</ecNumber>
    </recommendedName>
</protein>
<keyword id="KW-0067">ATP-binding</keyword>
<keyword id="KW-0963">Cytoplasm</keyword>
<keyword id="KW-0436">Ligase</keyword>
<keyword id="KW-0547">Nucleotide-binding</keyword>
<keyword id="KW-0694">RNA-binding</keyword>
<keyword id="KW-0819">tRNA processing</keyword>
<keyword id="KW-0820">tRNA-binding</keyword>
<proteinExistence type="inferred from homology"/>
<name>TMCAL_LACGA</name>
<feature type="chain" id="PRO_0000300175" description="tRNA(Met) cytidine acetate ligase">
    <location>
        <begin position="1"/>
        <end position="385"/>
    </location>
</feature>
<feature type="binding site" evidence="1">
    <location>
        <begin position="7"/>
        <end position="20"/>
    </location>
    <ligand>
        <name>ATP</name>
        <dbReference type="ChEBI" id="CHEBI:30616"/>
    </ligand>
</feature>
<feature type="binding site" evidence="1">
    <location>
        <position position="101"/>
    </location>
    <ligand>
        <name>ATP</name>
        <dbReference type="ChEBI" id="CHEBI:30616"/>
    </ligand>
</feature>
<feature type="binding site" evidence="1">
    <location>
        <position position="153"/>
    </location>
    <ligand>
        <name>ATP</name>
        <dbReference type="ChEBI" id="CHEBI:30616"/>
    </ligand>
</feature>
<feature type="binding site" evidence="1">
    <location>
        <position position="178"/>
    </location>
    <ligand>
        <name>ATP</name>
        <dbReference type="ChEBI" id="CHEBI:30616"/>
    </ligand>
</feature>